<organism>
    <name type="scientific">Gibberella zeae (strain ATCC MYA-4620 / CBS 123657 / FGSC 9075 / NRRL 31084 / PH-1)</name>
    <name type="common">Wheat head blight fungus</name>
    <name type="synonym">Fusarium graminearum</name>
    <dbReference type="NCBI Taxonomy" id="229533"/>
    <lineage>
        <taxon>Eukaryota</taxon>
        <taxon>Fungi</taxon>
        <taxon>Dikarya</taxon>
        <taxon>Ascomycota</taxon>
        <taxon>Pezizomycotina</taxon>
        <taxon>Sordariomycetes</taxon>
        <taxon>Hypocreomycetidae</taxon>
        <taxon>Hypocreales</taxon>
        <taxon>Nectriaceae</taxon>
        <taxon>Fusarium</taxon>
    </lineage>
</organism>
<evidence type="ECO:0000250" key="1">
    <source>
        <dbReference type="UniProtKB" id="P04798"/>
    </source>
</evidence>
<evidence type="ECO:0000255" key="2"/>
<evidence type="ECO:0000255" key="3">
    <source>
        <dbReference type="PROSITE-ProRule" id="PRU00498"/>
    </source>
</evidence>
<evidence type="ECO:0000269" key="4">
    <source>
    </source>
</evidence>
<evidence type="ECO:0000303" key="5">
    <source>
    </source>
</evidence>
<evidence type="ECO:0000305" key="6"/>
<evidence type="ECO:0000305" key="7">
    <source>
    </source>
</evidence>
<gene>
    <name type="ORF">FGRAMPH1_01T09369</name>
    <name evidence="5" type="ORF">FGSG_08207</name>
</gene>
<dbReference type="EC" id="1.-.-.-" evidence="7"/>
<dbReference type="EMBL" id="HG970333">
    <property type="protein sequence ID" value="CEF76487.1"/>
    <property type="molecule type" value="Genomic_DNA"/>
</dbReference>
<dbReference type="SMR" id="A0A098DDI4"/>
<dbReference type="STRING" id="229533.A0A098DDI4"/>
<dbReference type="VEuPathDB" id="FungiDB:FGRAMPH1_01G09369"/>
<dbReference type="eggNOG" id="KOG0684">
    <property type="taxonomic scope" value="Eukaryota"/>
</dbReference>
<dbReference type="InParanoid" id="A0A098DDI4"/>
<dbReference type="Proteomes" id="UP000070720">
    <property type="component" value="Chromosome 2"/>
</dbReference>
<dbReference type="GO" id="GO:0016020">
    <property type="term" value="C:membrane"/>
    <property type="evidence" value="ECO:0007669"/>
    <property type="project" value="UniProtKB-SubCell"/>
</dbReference>
<dbReference type="GO" id="GO:0020037">
    <property type="term" value="F:heme binding"/>
    <property type="evidence" value="ECO:0007669"/>
    <property type="project" value="InterPro"/>
</dbReference>
<dbReference type="GO" id="GO:0005506">
    <property type="term" value="F:iron ion binding"/>
    <property type="evidence" value="ECO:0007669"/>
    <property type="project" value="InterPro"/>
</dbReference>
<dbReference type="GO" id="GO:0004497">
    <property type="term" value="F:monooxygenase activity"/>
    <property type="evidence" value="ECO:0007669"/>
    <property type="project" value="UniProtKB-KW"/>
</dbReference>
<dbReference type="GO" id="GO:0016705">
    <property type="term" value="F:oxidoreductase activity, acting on paired donors, with incorporation or reduction of molecular oxygen"/>
    <property type="evidence" value="ECO:0007669"/>
    <property type="project" value="InterPro"/>
</dbReference>
<dbReference type="CDD" id="cd11040">
    <property type="entry name" value="CYP7_CYP8-like"/>
    <property type="match status" value="1"/>
</dbReference>
<dbReference type="Gene3D" id="1.10.630.10">
    <property type="entry name" value="Cytochrome P450"/>
    <property type="match status" value="1"/>
</dbReference>
<dbReference type="InterPro" id="IPR053007">
    <property type="entry name" value="CYP450_monoxygenase_sec-met"/>
</dbReference>
<dbReference type="InterPro" id="IPR001128">
    <property type="entry name" value="Cyt_P450"/>
</dbReference>
<dbReference type="InterPro" id="IPR017972">
    <property type="entry name" value="Cyt_P450_CS"/>
</dbReference>
<dbReference type="InterPro" id="IPR002403">
    <property type="entry name" value="Cyt_P450_E_grp-IV"/>
</dbReference>
<dbReference type="InterPro" id="IPR036396">
    <property type="entry name" value="Cyt_P450_sf"/>
</dbReference>
<dbReference type="PANTHER" id="PTHR47582">
    <property type="entry name" value="P450, PUTATIVE (EUROFUNG)-RELATED"/>
    <property type="match status" value="1"/>
</dbReference>
<dbReference type="PANTHER" id="PTHR47582:SF1">
    <property type="entry name" value="P450, PUTATIVE (EUROFUNG)-RELATED"/>
    <property type="match status" value="1"/>
</dbReference>
<dbReference type="Pfam" id="PF00067">
    <property type="entry name" value="p450"/>
    <property type="match status" value="1"/>
</dbReference>
<dbReference type="PRINTS" id="PR00465">
    <property type="entry name" value="EP450IV"/>
</dbReference>
<dbReference type="SUPFAM" id="SSF48264">
    <property type="entry name" value="Cytochrome P450"/>
    <property type="match status" value="1"/>
</dbReference>
<dbReference type="PROSITE" id="PS00086">
    <property type="entry name" value="CYTOCHROME_P450"/>
    <property type="match status" value="1"/>
</dbReference>
<accession>A0A098DDI4</accession>
<accession>A0A0E0RZ12</accession>
<reference key="1">
    <citation type="journal article" date="2007" name="Science">
        <title>The Fusarium graminearum genome reveals a link between localized polymorphism and pathogen specialization.</title>
        <authorList>
            <person name="Cuomo C.A."/>
            <person name="Gueldener U."/>
            <person name="Xu J.-R."/>
            <person name="Trail F."/>
            <person name="Turgeon B.G."/>
            <person name="Di Pietro A."/>
            <person name="Walton J.D."/>
            <person name="Ma L.-J."/>
            <person name="Baker S.E."/>
            <person name="Rep M."/>
            <person name="Adam G."/>
            <person name="Antoniw J."/>
            <person name="Baldwin T."/>
            <person name="Calvo S.E."/>
            <person name="Chang Y.-L."/>
            <person name="DeCaprio D."/>
            <person name="Gale L.R."/>
            <person name="Gnerre S."/>
            <person name="Goswami R.S."/>
            <person name="Hammond-Kosack K."/>
            <person name="Harris L.J."/>
            <person name="Hilburn K."/>
            <person name="Kennell J.C."/>
            <person name="Kroken S."/>
            <person name="Magnuson J.K."/>
            <person name="Mannhaupt G."/>
            <person name="Mauceli E.W."/>
            <person name="Mewes H.-W."/>
            <person name="Mitterbauer R."/>
            <person name="Muehlbauer G."/>
            <person name="Muensterkoetter M."/>
            <person name="Nelson D."/>
            <person name="O'Donnell K."/>
            <person name="Ouellet T."/>
            <person name="Qi W."/>
            <person name="Quesneville H."/>
            <person name="Roncero M.I.G."/>
            <person name="Seong K.-Y."/>
            <person name="Tetko I.V."/>
            <person name="Urban M."/>
            <person name="Waalwijk C."/>
            <person name="Ward T.J."/>
            <person name="Yao J."/>
            <person name="Birren B.W."/>
            <person name="Kistler H.C."/>
        </authorList>
    </citation>
    <scope>NUCLEOTIDE SEQUENCE [LARGE SCALE GENOMIC DNA]</scope>
    <source>
        <strain>ATCC MYA-4620 / CBS 123657 / FGSC 9075 / NRRL 31084 / PH-1</strain>
    </source>
</reference>
<reference key="2">
    <citation type="journal article" date="2010" name="Nature">
        <title>Comparative genomics reveals mobile pathogenicity chromosomes in Fusarium.</title>
        <authorList>
            <person name="Ma L.-J."/>
            <person name="van der Does H.C."/>
            <person name="Borkovich K.A."/>
            <person name="Coleman J.J."/>
            <person name="Daboussi M.-J."/>
            <person name="Di Pietro A."/>
            <person name="Dufresne M."/>
            <person name="Freitag M."/>
            <person name="Grabherr M."/>
            <person name="Henrissat B."/>
            <person name="Houterman P.M."/>
            <person name="Kang S."/>
            <person name="Shim W.-B."/>
            <person name="Woloshuk C."/>
            <person name="Xie X."/>
            <person name="Xu J.-R."/>
            <person name="Antoniw J."/>
            <person name="Baker S.E."/>
            <person name="Bluhm B.H."/>
            <person name="Breakspear A."/>
            <person name="Brown D.W."/>
            <person name="Butchko R.A.E."/>
            <person name="Chapman S."/>
            <person name="Coulson R."/>
            <person name="Coutinho P.M."/>
            <person name="Danchin E.G.J."/>
            <person name="Diener A."/>
            <person name="Gale L.R."/>
            <person name="Gardiner D.M."/>
            <person name="Goff S."/>
            <person name="Hammond-Kosack K.E."/>
            <person name="Hilburn K."/>
            <person name="Hua-Van A."/>
            <person name="Jonkers W."/>
            <person name="Kazan K."/>
            <person name="Kodira C.D."/>
            <person name="Koehrsen M."/>
            <person name="Kumar L."/>
            <person name="Lee Y.-H."/>
            <person name="Li L."/>
            <person name="Manners J.M."/>
            <person name="Miranda-Saavedra D."/>
            <person name="Mukherjee M."/>
            <person name="Park G."/>
            <person name="Park J."/>
            <person name="Park S.-Y."/>
            <person name="Proctor R.H."/>
            <person name="Regev A."/>
            <person name="Ruiz-Roldan M.C."/>
            <person name="Sain D."/>
            <person name="Sakthikumar S."/>
            <person name="Sykes S."/>
            <person name="Schwartz D.C."/>
            <person name="Turgeon B.G."/>
            <person name="Wapinski I."/>
            <person name="Yoder O."/>
            <person name="Young S."/>
            <person name="Zeng Q."/>
            <person name="Zhou S."/>
            <person name="Galagan J."/>
            <person name="Cuomo C.A."/>
            <person name="Kistler H.C."/>
            <person name="Rep M."/>
        </authorList>
    </citation>
    <scope>GENOME REANNOTATION</scope>
    <source>
        <strain>ATCC MYA-4620 / CBS 123657 / FGSC 9075 / NRRL 31084 / PH-1</strain>
    </source>
</reference>
<reference key="3">
    <citation type="journal article" date="2015" name="BMC Genomics">
        <title>The completed genome sequence of the pathogenic ascomycete fungus Fusarium graminearum.</title>
        <authorList>
            <person name="King R."/>
            <person name="Urban M."/>
            <person name="Hammond-Kosack M.C.U."/>
            <person name="Hassani-Pak K."/>
            <person name="Hammond-Kosack K.E."/>
        </authorList>
    </citation>
    <scope>NUCLEOTIDE SEQUENCE [LARGE SCALE GENOMIC DNA]</scope>
    <source>
        <strain>ATCC MYA-4620 / CBS 123657 / FGSC 9075 / NRRL 31084 / PH-1</strain>
    </source>
</reference>
<reference key="4">
    <citation type="journal article" date="2014" name="J. Nat. Prod.">
        <title>Identification of the biosynthetic gene clusters for the lipopeptides fusaristatin A and W493 B in Fusarium graminearum and F. pseudograminearum.</title>
        <authorList>
            <person name="Soerensen J.L."/>
            <person name="Sondergaard T.E."/>
            <person name="Covarelli L."/>
            <person name="Fuertes P.R."/>
            <person name="Hansen F.T."/>
            <person name="Frandsen R.J."/>
            <person name="Saei W."/>
            <person name="Lukassen M.B."/>
            <person name="Wimmer R."/>
            <person name="Nielsen K.F."/>
            <person name="Gardiner D.M."/>
            <person name="Giese H."/>
        </authorList>
    </citation>
    <scope>IDENTIFICATION</scope>
    <scope>FUNCTION</scope>
    <scope>PATHWAY</scope>
</reference>
<comment type="function">
    <text evidence="4 7">Cytochrome P450 monooxygenase; part of the gene cluster that mediates the biosynthesis of the lipopeptide fusaristatin A (PubMed:25412204). Fusaristatin A consists of a polyketide chain linked to three amino acid residues glutamine (Gln), dehydroalanine (dehydro-Ala), and beta-aminoisobutyric acid (PubMed:25412204). The biosynthesis starts with formation of a linear polyketide chain by the highly reducing polyketide synthase PKS6 (PubMed:25412204). The gene cluster does not contain an acyl-CoA ligase or an acyl-transferase, and it is therefore predicted that the polyketide is transferred directly to the nonribosomal peptide synthetase NRPS7 (Probable). Modules 1-3 from NRPS7 incorporate dehydro-Ala, Gln, and beta-aminoisobutyric acid in the compound, which is released by cyclization (PubMed:25412204). The beta-aminoisobutyric acid units are most likely not freely available to the NRPS, but can be synthesized from thymine, which requires a dehydrogenase, a monooxygenase, and an aminotransferase. The fusaristatin A cluster contains a cytochrome P450 monooxygenase (FGSG_08207) and an aminotransferase (FGSG_17085), which theoretically can perform two of the enzymatic steps (Probable). The enzymes may however also be involved in biosynthesis of dehydroalanine or modification of the polyketide (Probable). The dehydro-Ala residue can be a result of cyclization, where serine is dehydrated (Probable). The last gene of the cluster encodes a protein with an A/B barrel domain found in variable enzymes, which hampers functional prediction (Probable).</text>
</comment>
<comment type="cofactor">
    <cofactor evidence="1">
        <name>heme</name>
        <dbReference type="ChEBI" id="CHEBI:30413"/>
    </cofactor>
</comment>
<comment type="pathway">
    <text evidence="7">Secondary metabolite biosynthesis.</text>
</comment>
<comment type="subcellular location">
    <subcellularLocation>
        <location evidence="2">Membrane</location>
        <topology evidence="2">Single-pass membrane protein</topology>
    </subcellularLocation>
</comment>
<comment type="similarity">
    <text evidence="6">Belongs to the cytochrome P450 family.</text>
</comment>
<keyword id="KW-0325">Glycoprotein</keyword>
<keyword id="KW-0349">Heme</keyword>
<keyword id="KW-0408">Iron</keyword>
<keyword id="KW-0472">Membrane</keyword>
<keyword id="KW-0479">Metal-binding</keyword>
<keyword id="KW-0503">Monooxygenase</keyword>
<keyword id="KW-0560">Oxidoreductase</keyword>
<keyword id="KW-1185">Reference proteome</keyword>
<keyword id="KW-0812">Transmembrane</keyword>
<keyword id="KW-1133">Transmembrane helix</keyword>
<protein>
    <recommendedName>
        <fullName evidence="5">Cytochrome P450 monooxygenase FGSG_08207</fullName>
        <ecNumber evidence="7">1.-.-.-</ecNumber>
    </recommendedName>
    <alternativeName>
        <fullName evidence="5">Fusaristatin A biosynthesis cluster protein FGSG_08207</fullName>
    </alternativeName>
</protein>
<sequence length="522" mass="58938">MALTEGISELLLSKPVVLGLAACALLFLIGRAFEPTVDALEPPMLRPSIPIFGHFYSMMKDQEAFFKRLDKKYHMPIATVPILKYKMYAITDPILVQSAYCNKNLSFTPFAINGAQKVTGFDDDYHKVLMETNVLPEYFKSLYDGTTAQHIHQLNVTSLKHVSQHINSIQENGMTIDNTYLWLRNLMTVATCEALYGPDNPIRSDSLVEDIWTFETGLAYLFFHIFNSKTLQRTKEARRRIQLALGKWCTNMRQDDERVSAYIRNRVGILRNYGVEGQKLGDIEVGLIHVPTSNSIPTLFWFFMHVFTRPDVVEQMRAEVEHIVQRGPDETVTVNIDDILERCPLMISAYREASRLCNGFTCNRIVMEETTITDRHGRSYLLKKGSSVKMPAGVMHASQEVWGEDAAVFRADRFLDKGLTSEQAKLRRAALTPFGGGAHMCPGRNFATAEIYGFMTALLLGYNVEPVDGKWDAFKPPPMATCPQSTSVCKPEDEASVCGTRLIRRSGWEGAQWKFVSGKVTE</sequence>
<proteinExistence type="inferred from homology"/>
<name>FUSA5_GIBZE</name>
<feature type="chain" id="PRO_0000445368" description="Cytochrome P450 monooxygenase FGSG_08207">
    <location>
        <begin position="1"/>
        <end position="522"/>
    </location>
</feature>
<feature type="transmembrane region" description="Helical" evidence="2">
    <location>
        <begin position="10"/>
        <end position="30"/>
    </location>
</feature>
<feature type="binding site" description="axial binding residue" evidence="1">
    <location>
        <position position="441"/>
    </location>
    <ligand>
        <name>heme</name>
        <dbReference type="ChEBI" id="CHEBI:30413"/>
    </ligand>
    <ligandPart>
        <name>Fe</name>
        <dbReference type="ChEBI" id="CHEBI:18248"/>
    </ligandPart>
</feature>
<feature type="glycosylation site" description="N-linked (GlcNAc...) asparagine" evidence="3">
    <location>
        <position position="104"/>
    </location>
</feature>
<feature type="glycosylation site" description="N-linked (GlcNAc...) asparagine" evidence="3">
    <location>
        <position position="155"/>
    </location>
</feature>